<proteinExistence type="evidence at transcript level"/>
<feature type="initiator methionine" description="Removed" evidence="1">
    <location>
        <position position="1"/>
    </location>
</feature>
<feature type="chain" id="PRO_0000221317" description="Histone H3, embryonic">
    <location>
        <begin position="2"/>
        <end position="136"/>
    </location>
</feature>
<feature type="region of interest" description="Disordered" evidence="2">
    <location>
        <begin position="1"/>
        <end position="43"/>
    </location>
</feature>
<feature type="modified residue" description="N6-methylated lysine" evidence="1">
    <location>
        <position position="5"/>
    </location>
</feature>
<feature type="modified residue" description="N6-acetyllysine; alternate" evidence="1">
    <location>
        <position position="10"/>
    </location>
</feature>
<feature type="modified residue" description="N6-methylated lysine; alternate" evidence="1">
    <location>
        <position position="10"/>
    </location>
</feature>
<feature type="modified residue" description="Phosphoserine" evidence="1">
    <location>
        <position position="11"/>
    </location>
</feature>
<feature type="modified residue" description="N6-acetyllysine" evidence="1">
    <location>
        <position position="15"/>
    </location>
</feature>
<feature type="modified residue" description="N6-acetyllysine" evidence="1">
    <location>
        <position position="24"/>
    </location>
</feature>
<feature type="modified residue" description="N6-methylated lysine" evidence="1">
    <location>
        <position position="28"/>
    </location>
</feature>
<feature type="modified residue" description="N6-methylated lysine" evidence="1">
    <location>
        <position position="37"/>
    </location>
</feature>
<feature type="modified residue" description="N6-methylated lysine" evidence="1">
    <location>
        <position position="80"/>
    </location>
</feature>
<reference key="1">
    <citation type="submission" date="1990-07" db="EMBL/GenBank/DDBJ databases">
        <title>Sequence and organisation of histone gene clusters in sea stars.</title>
        <authorList>
            <person name="Wu Y."/>
            <person name="Kowbel D."/>
            <person name="Smith M.J."/>
        </authorList>
    </citation>
    <scope>NUCLEOTIDE SEQUENCE [GENOMIC DNA]</scope>
</reference>
<dbReference type="EMBL" id="X54114">
    <property type="protein sequence ID" value="CAA38054.1"/>
    <property type="molecule type" value="Genomic_DNA"/>
</dbReference>
<dbReference type="PIR" id="S20669">
    <property type="entry name" value="S20669"/>
</dbReference>
<dbReference type="SMR" id="P69077"/>
<dbReference type="GO" id="GO:0000786">
    <property type="term" value="C:nucleosome"/>
    <property type="evidence" value="ECO:0007669"/>
    <property type="project" value="UniProtKB-KW"/>
</dbReference>
<dbReference type="GO" id="GO:0005634">
    <property type="term" value="C:nucleus"/>
    <property type="evidence" value="ECO:0007669"/>
    <property type="project" value="UniProtKB-SubCell"/>
</dbReference>
<dbReference type="GO" id="GO:0003677">
    <property type="term" value="F:DNA binding"/>
    <property type="evidence" value="ECO:0007669"/>
    <property type="project" value="UniProtKB-KW"/>
</dbReference>
<dbReference type="GO" id="GO:0046982">
    <property type="term" value="F:protein heterodimerization activity"/>
    <property type="evidence" value="ECO:0007669"/>
    <property type="project" value="InterPro"/>
</dbReference>
<dbReference type="GO" id="GO:0030527">
    <property type="term" value="F:structural constituent of chromatin"/>
    <property type="evidence" value="ECO:0007669"/>
    <property type="project" value="InterPro"/>
</dbReference>
<dbReference type="CDD" id="cd22911">
    <property type="entry name" value="HFD_H3"/>
    <property type="match status" value="1"/>
</dbReference>
<dbReference type="FunFam" id="1.10.20.10:FF:000078">
    <property type="entry name" value="Histone H3"/>
    <property type="match status" value="1"/>
</dbReference>
<dbReference type="FunFam" id="1.10.20.10:FF:000044">
    <property type="entry name" value="Histone H3.3"/>
    <property type="match status" value="1"/>
</dbReference>
<dbReference type="Gene3D" id="1.10.20.10">
    <property type="entry name" value="Histone, subunit A"/>
    <property type="match status" value="1"/>
</dbReference>
<dbReference type="InterPro" id="IPR009072">
    <property type="entry name" value="Histone-fold"/>
</dbReference>
<dbReference type="InterPro" id="IPR007125">
    <property type="entry name" value="Histone_H2A/H2B/H3"/>
</dbReference>
<dbReference type="InterPro" id="IPR000164">
    <property type="entry name" value="Histone_H3/CENP-A"/>
</dbReference>
<dbReference type="PANTHER" id="PTHR11426">
    <property type="entry name" value="HISTONE H3"/>
    <property type="match status" value="1"/>
</dbReference>
<dbReference type="Pfam" id="PF00125">
    <property type="entry name" value="Histone"/>
    <property type="match status" value="1"/>
</dbReference>
<dbReference type="PRINTS" id="PR00622">
    <property type="entry name" value="HISTONEH3"/>
</dbReference>
<dbReference type="SMART" id="SM00428">
    <property type="entry name" value="H3"/>
    <property type="match status" value="1"/>
</dbReference>
<dbReference type="SUPFAM" id="SSF47113">
    <property type="entry name" value="Histone-fold"/>
    <property type="match status" value="1"/>
</dbReference>
<dbReference type="PROSITE" id="PS00322">
    <property type="entry name" value="HISTONE_H3_1"/>
    <property type="match status" value="1"/>
</dbReference>
<dbReference type="PROSITE" id="PS00959">
    <property type="entry name" value="HISTONE_H3_2"/>
    <property type="match status" value="1"/>
</dbReference>
<keyword id="KW-0007">Acetylation</keyword>
<keyword id="KW-0158">Chromosome</keyword>
<keyword id="KW-0238">DNA-binding</keyword>
<keyword id="KW-0488">Methylation</keyword>
<keyword id="KW-0544">Nucleosome core</keyword>
<keyword id="KW-0539">Nucleus</keyword>
<keyword id="KW-0597">Phosphoprotein</keyword>
<organism>
    <name type="scientific">Pycnopodia helianthoides</name>
    <name type="common">Sunflower sea star</name>
    <name type="synonym">Asterias helianthoides</name>
    <dbReference type="NCBI Taxonomy" id="7614"/>
    <lineage>
        <taxon>Eukaryota</taxon>
        <taxon>Metazoa</taxon>
        <taxon>Echinodermata</taxon>
        <taxon>Eleutherozoa</taxon>
        <taxon>Asterozoa</taxon>
        <taxon>Asteroidea</taxon>
        <taxon>Forcipulatacea</taxon>
        <taxon>Forcipulatida</taxon>
        <taxon>Asteriidae</taxon>
        <taxon>Pycnopodia</taxon>
    </lineage>
</organism>
<name>H3_PYCHE</name>
<sequence>MARTKQTARKSTGGKAPRKQLATKAARKSAPATGGVKKPHRYRPGTVALREIRRYQKSTELLIRKLPFQRLVREIAQDFKTELRFQSSAVMALQEASEAYLVGLFEDTNLCAIHAKRVTIMPKDIQLARRIRGERA</sequence>
<protein>
    <recommendedName>
        <fullName>Histone H3, embryonic</fullName>
    </recommendedName>
</protein>
<accession>P69077</accession>
<accession>P02298</accession>
<accession>P05320</accession>
<accession>P05321</accession>
<accession>P05322</accession>
<comment type="function">
    <text>Core component of nucleosome. Nucleosomes wrap and compact DNA into chromatin, limiting DNA accessibility to the cellular machineries which require DNA as a template. Histones thereby play a central role in transcription regulation, DNA repair, DNA replication and chromosomal stability. DNA accessibility is regulated via a complex set of post-translational modifications of histones, also called histone code, and nucleosome remodeling.</text>
</comment>
<comment type="subunit">
    <text>The nucleosome is a histone octamer containing two molecules each of H2A, H2B, H3 and H4 assembled in one H3-H4 heterotetramer and two H2A-H2B heterodimers. The octamer wraps approximately 147 bp of DNA.</text>
</comment>
<comment type="subcellular location">
    <subcellularLocation>
        <location evidence="1">Nucleus</location>
    </subcellularLocation>
    <subcellularLocation>
        <location evidence="1">Chromosome</location>
    </subcellularLocation>
</comment>
<comment type="developmental stage">
    <text>This histone is expressed during late embryonic development.</text>
</comment>
<comment type="PTM">
    <text evidence="1">Acetylation is generally linked to gene activation.</text>
</comment>
<comment type="PTM">
    <text evidence="1">Methylation at Lys-5 is linked to gene activation. Methylation at Lys-10 is linked to gene repression (By similarity).</text>
</comment>
<comment type="similarity">
    <text evidence="3">Belongs to the histone H3 family.</text>
</comment>
<evidence type="ECO:0000250" key="1"/>
<evidence type="ECO:0000256" key="2">
    <source>
        <dbReference type="SAM" id="MobiDB-lite"/>
    </source>
</evidence>
<evidence type="ECO:0000305" key="3"/>